<dbReference type="EC" id="6.3.5.7" evidence="1"/>
<dbReference type="EMBL" id="CP001337">
    <property type="protein sequence ID" value="ACL24364.1"/>
    <property type="molecule type" value="Genomic_DNA"/>
</dbReference>
<dbReference type="RefSeq" id="WP_015940223.1">
    <property type="nucleotide sequence ID" value="NC_011831.1"/>
</dbReference>
<dbReference type="SMR" id="B8G974"/>
<dbReference type="STRING" id="326427.Cagg_1458"/>
<dbReference type="KEGG" id="cag:Cagg_1458"/>
<dbReference type="eggNOG" id="COG0154">
    <property type="taxonomic scope" value="Bacteria"/>
</dbReference>
<dbReference type="HOGENOM" id="CLU_009600_0_3_0"/>
<dbReference type="OrthoDB" id="9811471at2"/>
<dbReference type="Proteomes" id="UP000002508">
    <property type="component" value="Chromosome"/>
</dbReference>
<dbReference type="GO" id="GO:0030956">
    <property type="term" value="C:glutamyl-tRNA(Gln) amidotransferase complex"/>
    <property type="evidence" value="ECO:0007669"/>
    <property type="project" value="InterPro"/>
</dbReference>
<dbReference type="GO" id="GO:0005524">
    <property type="term" value="F:ATP binding"/>
    <property type="evidence" value="ECO:0007669"/>
    <property type="project" value="UniProtKB-KW"/>
</dbReference>
<dbReference type="GO" id="GO:0050567">
    <property type="term" value="F:glutaminyl-tRNA synthase (glutamine-hydrolyzing) activity"/>
    <property type="evidence" value="ECO:0007669"/>
    <property type="project" value="UniProtKB-UniRule"/>
</dbReference>
<dbReference type="GO" id="GO:0006412">
    <property type="term" value="P:translation"/>
    <property type="evidence" value="ECO:0007669"/>
    <property type="project" value="UniProtKB-UniRule"/>
</dbReference>
<dbReference type="Gene3D" id="3.90.1300.10">
    <property type="entry name" value="Amidase signature (AS) domain"/>
    <property type="match status" value="1"/>
</dbReference>
<dbReference type="HAMAP" id="MF_00120">
    <property type="entry name" value="GatA"/>
    <property type="match status" value="1"/>
</dbReference>
<dbReference type="InterPro" id="IPR000120">
    <property type="entry name" value="Amidase"/>
</dbReference>
<dbReference type="InterPro" id="IPR020556">
    <property type="entry name" value="Amidase_CS"/>
</dbReference>
<dbReference type="InterPro" id="IPR023631">
    <property type="entry name" value="Amidase_dom"/>
</dbReference>
<dbReference type="InterPro" id="IPR036928">
    <property type="entry name" value="AS_sf"/>
</dbReference>
<dbReference type="InterPro" id="IPR004412">
    <property type="entry name" value="GatA"/>
</dbReference>
<dbReference type="NCBIfam" id="TIGR00132">
    <property type="entry name" value="gatA"/>
    <property type="match status" value="1"/>
</dbReference>
<dbReference type="PANTHER" id="PTHR11895:SF151">
    <property type="entry name" value="GLUTAMYL-TRNA(GLN) AMIDOTRANSFERASE SUBUNIT A"/>
    <property type="match status" value="1"/>
</dbReference>
<dbReference type="PANTHER" id="PTHR11895">
    <property type="entry name" value="TRANSAMIDASE"/>
    <property type="match status" value="1"/>
</dbReference>
<dbReference type="Pfam" id="PF01425">
    <property type="entry name" value="Amidase"/>
    <property type="match status" value="1"/>
</dbReference>
<dbReference type="PIRSF" id="PIRSF001221">
    <property type="entry name" value="Amidase_fungi"/>
    <property type="match status" value="1"/>
</dbReference>
<dbReference type="SUPFAM" id="SSF75304">
    <property type="entry name" value="Amidase signature (AS) enzymes"/>
    <property type="match status" value="1"/>
</dbReference>
<dbReference type="PROSITE" id="PS00571">
    <property type="entry name" value="AMIDASES"/>
    <property type="match status" value="1"/>
</dbReference>
<reference key="1">
    <citation type="submission" date="2008-12" db="EMBL/GenBank/DDBJ databases">
        <title>Complete sequence of Chloroflexus aggregans DSM 9485.</title>
        <authorList>
            <consortium name="US DOE Joint Genome Institute"/>
            <person name="Lucas S."/>
            <person name="Copeland A."/>
            <person name="Lapidus A."/>
            <person name="Glavina del Rio T."/>
            <person name="Dalin E."/>
            <person name="Tice H."/>
            <person name="Pitluck S."/>
            <person name="Foster B."/>
            <person name="Larimer F."/>
            <person name="Land M."/>
            <person name="Hauser L."/>
            <person name="Kyrpides N."/>
            <person name="Mikhailova N."/>
            <person name="Bryant D.A."/>
            <person name="Richardson P."/>
        </authorList>
    </citation>
    <scope>NUCLEOTIDE SEQUENCE [LARGE SCALE GENOMIC DNA]</scope>
    <source>
        <strain>MD-66 / DSM 9485</strain>
    </source>
</reference>
<name>GATA_CHLAD</name>
<accession>B8G974</accession>
<feature type="chain" id="PRO_1000203027" description="Glutamyl-tRNA(Gln) amidotransferase subunit A">
    <location>
        <begin position="1"/>
        <end position="488"/>
    </location>
</feature>
<feature type="active site" description="Charge relay system" evidence="1">
    <location>
        <position position="80"/>
    </location>
</feature>
<feature type="active site" description="Charge relay system" evidence="1">
    <location>
        <position position="155"/>
    </location>
</feature>
<feature type="active site" description="Acyl-ester intermediate" evidence="1">
    <location>
        <position position="179"/>
    </location>
</feature>
<proteinExistence type="inferred from homology"/>
<sequence length="488" mass="52105">MTELHYLTVSAAHTALAAGELTAVELTEACLARINATEPQIRAFLHLTPEAALAAARAADERRRRGQALSPLDGIPIGIKDVICTNGVPTTAGSRILAGFRPPYNATVIERLLAAGTVLIGKLNCDEFAMGSSTENSAYQITTNPWDTSRVPGGSSGGSAAAVAAGQVPATLGTDTGGSIRQPAALCGISGLKPTYGRVSRYGLIAYGSSLDQIGPMAWTVADLALIMNVIAGHDPRDGTSAPLPTPDYTAALTGDIRGLRIGIPREYFVEGMEPGVEAATRTAIEVLREQGATLVEVSLPHTKYALPTYYIIAPAEASANLARFDGVRYGFRAEGETMWEQIEQTRGQGFGPEVRRRIMLGTYALSAGYYDAYYRRAQQVRTLIKRDFDQVFNEVDLLATPTSPTVAFPIGQKINDPLAMYLSDVCTLPINLAGVPALVVPCGFSDGLPVGLQLIGRPFDEATLLRVGDAYQRVTDWHTRRPDLARA</sequence>
<organism>
    <name type="scientific">Chloroflexus aggregans (strain MD-66 / DSM 9485)</name>
    <dbReference type="NCBI Taxonomy" id="326427"/>
    <lineage>
        <taxon>Bacteria</taxon>
        <taxon>Bacillati</taxon>
        <taxon>Chloroflexota</taxon>
        <taxon>Chloroflexia</taxon>
        <taxon>Chloroflexales</taxon>
        <taxon>Chloroflexineae</taxon>
        <taxon>Chloroflexaceae</taxon>
        <taxon>Chloroflexus</taxon>
    </lineage>
</organism>
<keyword id="KW-0067">ATP-binding</keyword>
<keyword id="KW-0436">Ligase</keyword>
<keyword id="KW-0547">Nucleotide-binding</keyword>
<keyword id="KW-0648">Protein biosynthesis</keyword>
<protein>
    <recommendedName>
        <fullName evidence="1">Glutamyl-tRNA(Gln) amidotransferase subunit A</fullName>
        <shortName evidence="1">Glu-ADT subunit A</shortName>
        <ecNumber evidence="1">6.3.5.7</ecNumber>
    </recommendedName>
</protein>
<gene>
    <name evidence="1" type="primary">gatA</name>
    <name type="ordered locus">Cagg_1458</name>
</gene>
<comment type="function">
    <text evidence="1">Allows the formation of correctly charged Gln-tRNA(Gln) through the transamidation of misacylated Glu-tRNA(Gln) in organisms which lack glutaminyl-tRNA synthetase. The reaction takes place in the presence of glutamine and ATP through an activated gamma-phospho-Glu-tRNA(Gln).</text>
</comment>
<comment type="catalytic activity">
    <reaction evidence="1">
        <text>L-glutamyl-tRNA(Gln) + L-glutamine + ATP + H2O = L-glutaminyl-tRNA(Gln) + L-glutamate + ADP + phosphate + H(+)</text>
        <dbReference type="Rhea" id="RHEA:17521"/>
        <dbReference type="Rhea" id="RHEA-COMP:9681"/>
        <dbReference type="Rhea" id="RHEA-COMP:9684"/>
        <dbReference type="ChEBI" id="CHEBI:15377"/>
        <dbReference type="ChEBI" id="CHEBI:15378"/>
        <dbReference type="ChEBI" id="CHEBI:29985"/>
        <dbReference type="ChEBI" id="CHEBI:30616"/>
        <dbReference type="ChEBI" id="CHEBI:43474"/>
        <dbReference type="ChEBI" id="CHEBI:58359"/>
        <dbReference type="ChEBI" id="CHEBI:78520"/>
        <dbReference type="ChEBI" id="CHEBI:78521"/>
        <dbReference type="ChEBI" id="CHEBI:456216"/>
        <dbReference type="EC" id="6.3.5.7"/>
    </reaction>
</comment>
<comment type="subunit">
    <text evidence="1">Heterotrimer of A, B and C subunits.</text>
</comment>
<comment type="similarity">
    <text evidence="1">Belongs to the amidase family. GatA subfamily.</text>
</comment>
<evidence type="ECO:0000255" key="1">
    <source>
        <dbReference type="HAMAP-Rule" id="MF_00120"/>
    </source>
</evidence>